<dbReference type="EMBL" id="BC051205">
    <property type="protein sequence ID" value="AAH51205.1"/>
    <property type="status" value="ALT_INIT"/>
    <property type="molecule type" value="mRNA"/>
</dbReference>
<dbReference type="EMBL" id="BC054792">
    <property type="protein sequence ID" value="AAH54792.1"/>
    <property type="molecule type" value="mRNA"/>
</dbReference>
<dbReference type="EMBL" id="BC055697">
    <property type="protein sequence ID" value="AAH55697.1"/>
    <property type="molecule type" value="mRNA"/>
</dbReference>
<dbReference type="EMBL" id="BC076563">
    <property type="protein sequence ID" value="AAH76563.1"/>
    <property type="molecule type" value="mRNA"/>
</dbReference>
<dbReference type="EMBL" id="BC081428">
    <property type="protein sequence ID" value="AAH81428.1"/>
    <property type="molecule type" value="mRNA"/>
</dbReference>
<dbReference type="EMBL" id="AK010652">
    <property type="protein sequence ID" value="BAB27092.1"/>
    <property type="molecule type" value="mRNA"/>
</dbReference>
<dbReference type="EMBL" id="AK011514">
    <property type="protein sequence ID" value="BAB27669.1"/>
    <property type="molecule type" value="mRNA"/>
</dbReference>
<dbReference type="EMBL" id="AK012485">
    <property type="protein sequence ID" value="BAB28272.1"/>
    <property type="molecule type" value="mRNA"/>
</dbReference>
<dbReference type="EMBL" id="AK012618">
    <property type="protein sequence ID" value="BAB28359.1"/>
    <property type="molecule type" value="mRNA"/>
</dbReference>
<dbReference type="EMBL" id="AK019235">
    <property type="protein sequence ID" value="BAB31617.1"/>
    <property type="molecule type" value="mRNA"/>
</dbReference>
<dbReference type="EMBL" id="AK028135">
    <property type="protein sequence ID" value="BAC25764.1"/>
    <property type="molecule type" value="mRNA"/>
</dbReference>
<dbReference type="EMBL" id="AK032522">
    <property type="protein sequence ID" value="BAC27909.1"/>
    <property type="molecule type" value="mRNA"/>
</dbReference>
<dbReference type="CCDS" id="CCDS21768.1"/>
<dbReference type="RefSeq" id="NP_733769.1">
    <property type="nucleotide sequence ID" value="NM_170669.2"/>
</dbReference>
<dbReference type="PDB" id="7CPU">
    <property type="method" value="EM"/>
    <property type="resolution" value="2.82 A"/>
    <property type="chains" value="SW=1-130"/>
</dbReference>
<dbReference type="PDB" id="7CPV">
    <property type="method" value="EM"/>
    <property type="resolution" value="3.03 A"/>
    <property type="chains" value="SW=1-130"/>
</dbReference>
<dbReference type="PDB" id="7LS1">
    <property type="method" value="EM"/>
    <property type="resolution" value="3.30 A"/>
    <property type="chains" value="P3=1-130"/>
</dbReference>
<dbReference type="PDB" id="7LS2">
    <property type="method" value="EM"/>
    <property type="resolution" value="3.10 A"/>
    <property type="chains" value="P3=1-130"/>
</dbReference>
<dbReference type="PDBsum" id="7CPU"/>
<dbReference type="PDBsum" id="7CPV"/>
<dbReference type="PDBsum" id="7LS1"/>
<dbReference type="PDBsum" id="7LS2"/>
<dbReference type="EMDB" id="EMD-23500"/>
<dbReference type="EMDB" id="EMD-23501"/>
<dbReference type="EMDB" id="EMD-30432"/>
<dbReference type="EMDB" id="EMD-30433"/>
<dbReference type="SMR" id="P62245"/>
<dbReference type="BioGRID" id="234473">
    <property type="interactions" value="79"/>
</dbReference>
<dbReference type="ComplexPortal" id="CPX-5261">
    <property type="entry name" value="40S cytosolic small ribosomal subunit"/>
</dbReference>
<dbReference type="FunCoup" id="P62245">
    <property type="interactions" value="2192"/>
</dbReference>
<dbReference type="IntAct" id="P62245">
    <property type="interactions" value="3"/>
</dbReference>
<dbReference type="STRING" id="10090.ENSMUSP00000119975"/>
<dbReference type="GlyGen" id="P62245">
    <property type="glycosylation" value="1 site, 1 O-linked glycan (1 site)"/>
</dbReference>
<dbReference type="iPTMnet" id="P62245"/>
<dbReference type="MetOSite" id="P62245"/>
<dbReference type="PhosphoSitePlus" id="P62245"/>
<dbReference type="SwissPalm" id="P62245"/>
<dbReference type="jPOST" id="P62245"/>
<dbReference type="PaxDb" id="10090-ENSMUSP00000119975"/>
<dbReference type="PeptideAtlas" id="P62245"/>
<dbReference type="ProteomicsDB" id="262711"/>
<dbReference type="Pumba" id="P62245"/>
<dbReference type="TopDownProteomics" id="P62245"/>
<dbReference type="Antibodypedia" id="42904">
    <property type="antibodies" value="100 antibodies from 21 providers"/>
</dbReference>
<dbReference type="DNASU" id="267019"/>
<dbReference type="Ensembl" id="ENSMUST00000106588.8">
    <property type="protein sequence ID" value="ENSMUSP00000102198.2"/>
    <property type="gene ID" value="ENSMUSG00000008683.17"/>
</dbReference>
<dbReference type="Ensembl" id="ENSMUST00000131374.8">
    <property type="protein sequence ID" value="ENSMUSP00000119975.2"/>
    <property type="gene ID" value="ENSMUSG00000008683.17"/>
</dbReference>
<dbReference type="Ensembl" id="ENSMUST00000172457.8">
    <property type="protein sequence ID" value="ENSMUSP00000127791.2"/>
    <property type="gene ID" value="ENSMUSG00000008683.17"/>
</dbReference>
<dbReference type="GeneID" id="267019"/>
<dbReference type="KEGG" id="mmu:267019"/>
<dbReference type="UCSC" id="uc009jjn.1">
    <property type="organism name" value="mouse"/>
</dbReference>
<dbReference type="AGR" id="MGI:2389091"/>
<dbReference type="CTD" id="6210"/>
<dbReference type="MGI" id="MGI:2389091">
    <property type="gene designation" value="Rps15a"/>
</dbReference>
<dbReference type="VEuPathDB" id="HostDB:ENSMUSG00000008683"/>
<dbReference type="eggNOG" id="KOG1754">
    <property type="taxonomic scope" value="Eukaryota"/>
</dbReference>
<dbReference type="GeneTree" id="ENSGT00950000183198"/>
<dbReference type="HOGENOM" id="CLU_098428_1_1_1"/>
<dbReference type="InParanoid" id="P62245"/>
<dbReference type="OMA" id="LPAKNFG"/>
<dbReference type="OrthoDB" id="10250260at2759"/>
<dbReference type="PhylomeDB" id="P62245"/>
<dbReference type="TreeFam" id="TF300067"/>
<dbReference type="Reactome" id="R-MMU-156827">
    <property type="pathway name" value="L13a-mediated translational silencing of Ceruloplasmin expression"/>
</dbReference>
<dbReference type="Reactome" id="R-MMU-1799339">
    <property type="pathway name" value="SRP-dependent cotranslational protein targeting to membrane"/>
</dbReference>
<dbReference type="Reactome" id="R-MMU-6791226">
    <property type="pathway name" value="Major pathway of rRNA processing in the nucleolus and cytosol"/>
</dbReference>
<dbReference type="Reactome" id="R-MMU-72649">
    <property type="pathway name" value="Translation initiation complex formation"/>
</dbReference>
<dbReference type="Reactome" id="R-MMU-72689">
    <property type="pathway name" value="Formation of a pool of free 40S subunits"/>
</dbReference>
<dbReference type="Reactome" id="R-MMU-72695">
    <property type="pathway name" value="Formation of the ternary complex, and subsequently, the 43S complex"/>
</dbReference>
<dbReference type="Reactome" id="R-MMU-72702">
    <property type="pathway name" value="Ribosomal scanning and start codon recognition"/>
</dbReference>
<dbReference type="Reactome" id="R-MMU-72706">
    <property type="pathway name" value="GTP hydrolysis and joining of the 60S ribosomal subunit"/>
</dbReference>
<dbReference type="Reactome" id="R-MMU-975956">
    <property type="pathway name" value="Nonsense Mediated Decay (NMD) independent of the Exon Junction Complex (EJC)"/>
</dbReference>
<dbReference type="Reactome" id="R-MMU-975957">
    <property type="pathway name" value="Nonsense Mediated Decay (NMD) enhanced by the Exon Junction Complex (EJC)"/>
</dbReference>
<dbReference type="BioGRID-ORCS" id="267019">
    <property type="hits" value="27 hits in 62 CRISPR screens"/>
</dbReference>
<dbReference type="CD-CODE" id="5E82D60E">
    <property type="entry name" value="Nucleolus"/>
</dbReference>
<dbReference type="CD-CODE" id="CE726F99">
    <property type="entry name" value="Postsynaptic density"/>
</dbReference>
<dbReference type="ChiTaRS" id="Rps15a">
    <property type="organism name" value="mouse"/>
</dbReference>
<dbReference type="PRO" id="PR:P62245"/>
<dbReference type="Proteomes" id="UP000000589">
    <property type="component" value="Chromosome 7"/>
</dbReference>
<dbReference type="RNAct" id="P62245">
    <property type="molecule type" value="protein"/>
</dbReference>
<dbReference type="Bgee" id="ENSMUSG00000008683">
    <property type="expression patterns" value="Expressed in ventricular zone and 163 other cell types or tissues"/>
</dbReference>
<dbReference type="ExpressionAtlas" id="P62245">
    <property type="expression patterns" value="baseline and differential"/>
</dbReference>
<dbReference type="GO" id="GO:0005737">
    <property type="term" value="C:cytoplasm"/>
    <property type="evidence" value="ECO:0000303"/>
    <property type="project" value="ComplexPortal"/>
</dbReference>
<dbReference type="GO" id="GO:0005829">
    <property type="term" value="C:cytosol"/>
    <property type="evidence" value="ECO:0000304"/>
    <property type="project" value="Reactome"/>
</dbReference>
<dbReference type="GO" id="GO:0022627">
    <property type="term" value="C:cytosolic small ribosomal subunit"/>
    <property type="evidence" value="ECO:0000314"/>
    <property type="project" value="UniProtKB"/>
</dbReference>
<dbReference type="GO" id="GO:0005739">
    <property type="term" value="C:mitochondrion"/>
    <property type="evidence" value="ECO:0007005"/>
    <property type="project" value="MGI"/>
</dbReference>
<dbReference type="GO" id="GO:0005730">
    <property type="term" value="C:nucleolus"/>
    <property type="evidence" value="ECO:0007669"/>
    <property type="project" value="UniProtKB-SubCell"/>
</dbReference>
<dbReference type="GO" id="GO:0098794">
    <property type="term" value="C:postsynapse"/>
    <property type="evidence" value="ECO:0000303"/>
    <property type="project" value="SynGO"/>
</dbReference>
<dbReference type="GO" id="GO:0098793">
    <property type="term" value="C:presynapse"/>
    <property type="evidence" value="ECO:0000303"/>
    <property type="project" value="SynGO"/>
</dbReference>
<dbReference type="GO" id="GO:0005840">
    <property type="term" value="C:ribosome"/>
    <property type="evidence" value="ECO:0000303"/>
    <property type="project" value="SynGO"/>
</dbReference>
<dbReference type="GO" id="GO:0032040">
    <property type="term" value="C:small-subunit processome"/>
    <property type="evidence" value="ECO:0000250"/>
    <property type="project" value="UniProtKB"/>
</dbReference>
<dbReference type="GO" id="GO:0045202">
    <property type="term" value="C:synapse"/>
    <property type="evidence" value="ECO:0000314"/>
    <property type="project" value="SynGO"/>
</dbReference>
<dbReference type="GO" id="GO:0003735">
    <property type="term" value="F:structural constituent of ribosome"/>
    <property type="evidence" value="ECO:0000314"/>
    <property type="project" value="UniProtKB"/>
</dbReference>
<dbReference type="GO" id="GO:0002181">
    <property type="term" value="P:cytoplasmic translation"/>
    <property type="evidence" value="ECO:0000303"/>
    <property type="project" value="ComplexPortal"/>
</dbReference>
<dbReference type="GO" id="GO:0042274">
    <property type="term" value="P:ribosomal small subunit biogenesis"/>
    <property type="evidence" value="ECO:0000250"/>
    <property type="project" value="UniProtKB"/>
</dbReference>
<dbReference type="GO" id="GO:0140242">
    <property type="term" value="P:translation at postsynapse"/>
    <property type="evidence" value="ECO:0000303"/>
    <property type="project" value="SynGO"/>
</dbReference>
<dbReference type="GO" id="GO:0140236">
    <property type="term" value="P:translation at presynapse"/>
    <property type="evidence" value="ECO:0000303"/>
    <property type="project" value="SynGO"/>
</dbReference>
<dbReference type="FunFam" id="3.30.1370.30:FF:000001">
    <property type="entry name" value="40S ribosomal protein S15a"/>
    <property type="match status" value="1"/>
</dbReference>
<dbReference type="FunFam" id="3.30.1490.10:FF:000002">
    <property type="entry name" value="40S ribosomal protein S15a"/>
    <property type="match status" value="1"/>
</dbReference>
<dbReference type="Gene3D" id="3.30.1370.30">
    <property type="match status" value="1"/>
</dbReference>
<dbReference type="Gene3D" id="3.30.1490.10">
    <property type="match status" value="1"/>
</dbReference>
<dbReference type="HAMAP" id="MF_01302_A">
    <property type="entry name" value="Ribosomal_uS8_A"/>
    <property type="match status" value="1"/>
</dbReference>
<dbReference type="InterPro" id="IPR000630">
    <property type="entry name" value="Ribosomal_uS8"/>
</dbReference>
<dbReference type="InterPro" id="IPR047863">
    <property type="entry name" value="Ribosomal_uS8_CS"/>
</dbReference>
<dbReference type="InterPro" id="IPR035987">
    <property type="entry name" value="Ribosomal_uS8_sf"/>
</dbReference>
<dbReference type="NCBIfam" id="NF003115">
    <property type="entry name" value="PRK04034.1"/>
    <property type="match status" value="1"/>
</dbReference>
<dbReference type="PANTHER" id="PTHR11758">
    <property type="entry name" value="40S RIBOSOMAL PROTEIN S15A"/>
    <property type="match status" value="1"/>
</dbReference>
<dbReference type="Pfam" id="PF00410">
    <property type="entry name" value="Ribosomal_S8"/>
    <property type="match status" value="1"/>
</dbReference>
<dbReference type="SUPFAM" id="SSF56047">
    <property type="entry name" value="Ribosomal protein S8"/>
    <property type="match status" value="1"/>
</dbReference>
<dbReference type="PROSITE" id="PS00053">
    <property type="entry name" value="RIBOSOMAL_S8"/>
    <property type="match status" value="1"/>
</dbReference>
<protein>
    <recommendedName>
        <fullName evidence="3">Small ribosomal subunit protein uS8</fullName>
    </recommendedName>
    <alternativeName>
        <fullName>40S ribosomal protein S15a</fullName>
    </alternativeName>
</protein>
<reference key="1">
    <citation type="journal article" date="2005" name="Science">
        <title>The transcriptional landscape of the mammalian genome.</title>
        <authorList>
            <person name="Carninci P."/>
            <person name="Kasukawa T."/>
            <person name="Katayama S."/>
            <person name="Gough J."/>
            <person name="Frith M.C."/>
            <person name="Maeda N."/>
            <person name="Oyama R."/>
            <person name="Ravasi T."/>
            <person name="Lenhard B."/>
            <person name="Wells C."/>
            <person name="Kodzius R."/>
            <person name="Shimokawa K."/>
            <person name="Bajic V.B."/>
            <person name="Brenner S.E."/>
            <person name="Batalov S."/>
            <person name="Forrest A.R."/>
            <person name="Zavolan M."/>
            <person name="Davis M.J."/>
            <person name="Wilming L.G."/>
            <person name="Aidinis V."/>
            <person name="Allen J.E."/>
            <person name="Ambesi-Impiombato A."/>
            <person name="Apweiler R."/>
            <person name="Aturaliya R.N."/>
            <person name="Bailey T.L."/>
            <person name="Bansal M."/>
            <person name="Baxter L."/>
            <person name="Beisel K.W."/>
            <person name="Bersano T."/>
            <person name="Bono H."/>
            <person name="Chalk A.M."/>
            <person name="Chiu K.P."/>
            <person name="Choudhary V."/>
            <person name="Christoffels A."/>
            <person name="Clutterbuck D.R."/>
            <person name="Crowe M.L."/>
            <person name="Dalla E."/>
            <person name="Dalrymple B.P."/>
            <person name="de Bono B."/>
            <person name="Della Gatta G."/>
            <person name="di Bernardo D."/>
            <person name="Down T."/>
            <person name="Engstrom P."/>
            <person name="Fagiolini M."/>
            <person name="Faulkner G."/>
            <person name="Fletcher C.F."/>
            <person name="Fukushima T."/>
            <person name="Furuno M."/>
            <person name="Futaki S."/>
            <person name="Gariboldi M."/>
            <person name="Georgii-Hemming P."/>
            <person name="Gingeras T.R."/>
            <person name="Gojobori T."/>
            <person name="Green R.E."/>
            <person name="Gustincich S."/>
            <person name="Harbers M."/>
            <person name="Hayashi Y."/>
            <person name="Hensch T.K."/>
            <person name="Hirokawa N."/>
            <person name="Hill D."/>
            <person name="Huminiecki L."/>
            <person name="Iacono M."/>
            <person name="Ikeo K."/>
            <person name="Iwama A."/>
            <person name="Ishikawa T."/>
            <person name="Jakt M."/>
            <person name="Kanapin A."/>
            <person name="Katoh M."/>
            <person name="Kawasawa Y."/>
            <person name="Kelso J."/>
            <person name="Kitamura H."/>
            <person name="Kitano H."/>
            <person name="Kollias G."/>
            <person name="Krishnan S.P."/>
            <person name="Kruger A."/>
            <person name="Kummerfeld S.K."/>
            <person name="Kurochkin I.V."/>
            <person name="Lareau L.F."/>
            <person name="Lazarevic D."/>
            <person name="Lipovich L."/>
            <person name="Liu J."/>
            <person name="Liuni S."/>
            <person name="McWilliam S."/>
            <person name="Madan Babu M."/>
            <person name="Madera M."/>
            <person name="Marchionni L."/>
            <person name="Matsuda H."/>
            <person name="Matsuzawa S."/>
            <person name="Miki H."/>
            <person name="Mignone F."/>
            <person name="Miyake S."/>
            <person name="Morris K."/>
            <person name="Mottagui-Tabar S."/>
            <person name="Mulder N."/>
            <person name="Nakano N."/>
            <person name="Nakauchi H."/>
            <person name="Ng P."/>
            <person name="Nilsson R."/>
            <person name="Nishiguchi S."/>
            <person name="Nishikawa S."/>
            <person name="Nori F."/>
            <person name="Ohara O."/>
            <person name="Okazaki Y."/>
            <person name="Orlando V."/>
            <person name="Pang K.C."/>
            <person name="Pavan W.J."/>
            <person name="Pavesi G."/>
            <person name="Pesole G."/>
            <person name="Petrovsky N."/>
            <person name="Piazza S."/>
            <person name="Reed J."/>
            <person name="Reid J.F."/>
            <person name="Ring B.Z."/>
            <person name="Ringwald M."/>
            <person name="Rost B."/>
            <person name="Ruan Y."/>
            <person name="Salzberg S.L."/>
            <person name="Sandelin A."/>
            <person name="Schneider C."/>
            <person name="Schoenbach C."/>
            <person name="Sekiguchi K."/>
            <person name="Semple C.A."/>
            <person name="Seno S."/>
            <person name="Sessa L."/>
            <person name="Sheng Y."/>
            <person name="Shibata Y."/>
            <person name="Shimada H."/>
            <person name="Shimada K."/>
            <person name="Silva D."/>
            <person name="Sinclair B."/>
            <person name="Sperling S."/>
            <person name="Stupka E."/>
            <person name="Sugiura K."/>
            <person name="Sultana R."/>
            <person name="Takenaka Y."/>
            <person name="Taki K."/>
            <person name="Tammoja K."/>
            <person name="Tan S.L."/>
            <person name="Tang S."/>
            <person name="Taylor M.S."/>
            <person name="Tegner J."/>
            <person name="Teichmann S.A."/>
            <person name="Ueda H.R."/>
            <person name="van Nimwegen E."/>
            <person name="Verardo R."/>
            <person name="Wei C.L."/>
            <person name="Yagi K."/>
            <person name="Yamanishi H."/>
            <person name="Zabarovsky E."/>
            <person name="Zhu S."/>
            <person name="Zimmer A."/>
            <person name="Hide W."/>
            <person name="Bult C."/>
            <person name="Grimmond S.M."/>
            <person name="Teasdale R.D."/>
            <person name="Liu E.T."/>
            <person name="Brusic V."/>
            <person name="Quackenbush J."/>
            <person name="Wahlestedt C."/>
            <person name="Mattick J.S."/>
            <person name="Hume D.A."/>
            <person name="Kai C."/>
            <person name="Sasaki D."/>
            <person name="Tomaru Y."/>
            <person name="Fukuda S."/>
            <person name="Kanamori-Katayama M."/>
            <person name="Suzuki M."/>
            <person name="Aoki J."/>
            <person name="Arakawa T."/>
            <person name="Iida J."/>
            <person name="Imamura K."/>
            <person name="Itoh M."/>
            <person name="Kato T."/>
            <person name="Kawaji H."/>
            <person name="Kawagashira N."/>
            <person name="Kawashima T."/>
            <person name="Kojima M."/>
            <person name="Kondo S."/>
            <person name="Konno H."/>
            <person name="Nakano K."/>
            <person name="Ninomiya N."/>
            <person name="Nishio T."/>
            <person name="Okada M."/>
            <person name="Plessy C."/>
            <person name="Shibata K."/>
            <person name="Shiraki T."/>
            <person name="Suzuki S."/>
            <person name="Tagami M."/>
            <person name="Waki K."/>
            <person name="Watahiki A."/>
            <person name="Okamura-Oho Y."/>
            <person name="Suzuki H."/>
            <person name="Kawai J."/>
            <person name="Hayashizaki Y."/>
        </authorList>
    </citation>
    <scope>NUCLEOTIDE SEQUENCE [LARGE SCALE MRNA]</scope>
    <source>
        <strain>C57BL/6J</strain>
        <tissue>Brain</tissue>
        <tissue>Embryo</tissue>
        <tissue>Stomach</tissue>
    </source>
</reference>
<reference key="2">
    <citation type="journal article" date="2004" name="Genome Res.">
        <title>The status, quality, and expansion of the NIH full-length cDNA project: the Mammalian Gene Collection (MGC).</title>
        <authorList>
            <consortium name="The MGC Project Team"/>
        </authorList>
    </citation>
    <scope>NUCLEOTIDE SEQUENCE [LARGE SCALE MRNA]</scope>
    <source>
        <strain>C57BL/6J</strain>
        <tissue>Brain</tissue>
        <tissue>Thymus</tissue>
    </source>
</reference>
<reference key="3">
    <citation type="journal article" date="2010" name="Cell">
        <title>A tissue-specific atlas of mouse protein phosphorylation and expression.</title>
        <authorList>
            <person name="Huttlin E.L."/>
            <person name="Jedrychowski M.P."/>
            <person name="Elias J.E."/>
            <person name="Goswami T."/>
            <person name="Rad R."/>
            <person name="Beausoleil S.A."/>
            <person name="Villen J."/>
            <person name="Haas W."/>
            <person name="Sowa M.E."/>
            <person name="Gygi S.P."/>
        </authorList>
    </citation>
    <scope>IDENTIFICATION BY MASS SPECTROMETRY [LARGE SCALE ANALYSIS]</scope>
    <source>
        <tissue>Brain</tissue>
        <tissue>Brown adipose tissue</tissue>
        <tissue>Heart</tissue>
        <tissue>Kidney</tissue>
        <tissue>Liver</tissue>
        <tissue>Lung</tissue>
        <tissue>Pancreas</tissue>
        <tissue>Spleen</tissue>
        <tissue>Testis</tissue>
    </source>
</reference>
<reference key="4">
    <citation type="journal article" date="2013" name="Mol. Cell">
        <title>SIRT5-mediated lysine desuccinylation impacts diverse metabolic pathways.</title>
        <authorList>
            <person name="Park J."/>
            <person name="Chen Y."/>
            <person name="Tishkoff D.X."/>
            <person name="Peng C."/>
            <person name="Tan M."/>
            <person name="Dai L."/>
            <person name="Xie Z."/>
            <person name="Zhang Y."/>
            <person name="Zwaans B.M."/>
            <person name="Skinner M.E."/>
            <person name="Lombard D.B."/>
            <person name="Zhao Y."/>
        </authorList>
    </citation>
    <scope>SUCCINYLATION [LARGE SCALE ANALYSIS] AT LYS-88</scope>
    <scope>IDENTIFICATION BY MASS SPECTROMETRY [LARGE SCALE ANALYSIS]</scope>
    <source>
        <tissue>Liver</tissue>
    </source>
</reference>
<reference evidence="4 5" key="5">
    <citation type="journal article" date="2022" name="Nature">
        <title>A male germ-cell-specific ribosome controls male fertility.</title>
        <authorList>
            <person name="Li H."/>
            <person name="Huo Y."/>
            <person name="He X."/>
            <person name="Yao L."/>
            <person name="Zhang H."/>
            <person name="Cui Y."/>
            <person name="Xiao H."/>
            <person name="Xie W."/>
            <person name="Zhang D."/>
            <person name="Wang Y."/>
            <person name="Zhang S."/>
            <person name="Tu H."/>
            <person name="Cheng Y."/>
            <person name="Guo Y."/>
            <person name="Cao X."/>
            <person name="Zhu Y."/>
            <person name="Jiang T."/>
            <person name="Guo X."/>
            <person name="Qin Y."/>
            <person name="Sha J."/>
        </authorList>
    </citation>
    <scope>STRUCTURE BY ELECTRON MICROSCOPY (3.03 ANGSTROMS) OF RIBOSOME</scope>
    <scope>FUNCTION</scope>
    <scope>SUBUNIT</scope>
    <scope>SUBCELLULAR LOCATION</scope>
</reference>
<keyword id="KW-0002">3D-structure</keyword>
<keyword id="KW-0963">Cytoplasm</keyword>
<keyword id="KW-0539">Nucleus</keyword>
<keyword id="KW-1185">Reference proteome</keyword>
<keyword id="KW-0687">Ribonucleoprotein</keyword>
<keyword id="KW-0689">Ribosomal protein</keyword>
<organism>
    <name type="scientific">Mus musculus</name>
    <name type="common">Mouse</name>
    <dbReference type="NCBI Taxonomy" id="10090"/>
    <lineage>
        <taxon>Eukaryota</taxon>
        <taxon>Metazoa</taxon>
        <taxon>Chordata</taxon>
        <taxon>Craniata</taxon>
        <taxon>Vertebrata</taxon>
        <taxon>Euteleostomi</taxon>
        <taxon>Mammalia</taxon>
        <taxon>Eutheria</taxon>
        <taxon>Euarchontoglires</taxon>
        <taxon>Glires</taxon>
        <taxon>Rodentia</taxon>
        <taxon>Myomorpha</taxon>
        <taxon>Muroidea</taxon>
        <taxon>Muridae</taxon>
        <taxon>Murinae</taxon>
        <taxon>Mus</taxon>
        <taxon>Mus</taxon>
    </lineage>
</organism>
<accession>P62245</accession>
<accession>P39027</accession>
<accession>P39031</accession>
<accession>Q8C023</accession>
<accession>Q9BV24</accession>
<name>RS15A_MOUSE</name>
<evidence type="ECO:0000250" key="1">
    <source>
        <dbReference type="UniProtKB" id="P62244"/>
    </source>
</evidence>
<evidence type="ECO:0000269" key="2">
    <source>
    </source>
</evidence>
<evidence type="ECO:0000305" key="3"/>
<evidence type="ECO:0007744" key="4">
    <source>
        <dbReference type="PDB" id="7CPU"/>
    </source>
</evidence>
<evidence type="ECO:0007744" key="5">
    <source>
        <dbReference type="PDB" id="7CPV"/>
    </source>
</evidence>
<evidence type="ECO:0007744" key="6">
    <source>
    </source>
</evidence>
<proteinExistence type="evidence at protein level"/>
<sequence>MVRMNVLADALKSINNAEKRGKRQVLIRPCSKVIVRFLTVMMKHGYIGEFEIIDDHRAGKIVVNLTGRLNKCGVISPRFDVQLKDLEKWQNNLLPSRQFGFIVLTTSAGIMDHEEARRKHTGGKILGFFF</sequence>
<gene>
    <name type="primary">Rps15a</name>
</gene>
<comment type="function">
    <text evidence="1 2">Component of the small ribosomal subunit (PubMed:36517592). The ribosome is a large ribonucleoprotein complex responsible for the synthesis of proteins in the cell (PubMed:36517592). Part of the small subunit (SSU) processome, first precursor of the small eukaryotic ribosomal subunit. During the assembly of the SSU processome in the nucleolus, many ribosome biogenesis factors, an RNA chaperone and ribosomal proteins associate with the nascent pre-rRNA and work in concert to generate RNA folding, modifications, rearrangements and cleavage as well as targeted degradation of pre-ribosomal RNA by the RNA exosome (By similarity). Required for proper erythropoiesis (By similarity).</text>
</comment>
<comment type="subunit">
    <text evidence="1 2">Component of the small ribosomal subunit. Part of the small subunit (SSU) processome, composed of more than 70 proteins and the RNA chaperone small nucleolar RNA (snoRNA) U3 (By similarity).</text>
</comment>
<comment type="subcellular location">
    <subcellularLocation>
        <location evidence="2">Cytoplasm</location>
    </subcellularLocation>
    <subcellularLocation>
        <location evidence="1">Nucleus</location>
        <location evidence="1">Nucleolus</location>
    </subcellularLocation>
</comment>
<comment type="similarity">
    <text evidence="3">Belongs to the universal ribosomal protein uS8 family.</text>
</comment>
<comment type="sequence caution" evidence="3">
    <conflict type="erroneous initiation">
        <sequence resource="EMBL-CDS" id="AAH51205"/>
    </conflict>
    <text>Extended N-terminus.</text>
</comment>
<feature type="chain" id="PRO_0000126603" description="Small ribosomal subunit protein uS8">
    <location>
        <begin position="1"/>
        <end position="130"/>
    </location>
</feature>
<feature type="modified residue" description="N6-succinyllysine" evidence="6">
    <location>
        <position position="88"/>
    </location>
</feature>
<feature type="sequence conflict" description="In Ref. 1; BAC27909." evidence="3" ref="1">
    <original>I</original>
    <variation>N</variation>
    <location>
        <position position="14"/>
    </location>
</feature>